<comment type="function">
    <text evidence="1">The natural substrate for this enzyme may be peptidyl-tRNAs which drop off the ribosome during protein synthesis.</text>
</comment>
<comment type="catalytic activity">
    <reaction evidence="1">
        <text>an N-acyl-L-alpha-aminoacyl-tRNA + H2O = an N-acyl-L-amino acid + a tRNA + H(+)</text>
        <dbReference type="Rhea" id="RHEA:54448"/>
        <dbReference type="Rhea" id="RHEA-COMP:10123"/>
        <dbReference type="Rhea" id="RHEA-COMP:13883"/>
        <dbReference type="ChEBI" id="CHEBI:15377"/>
        <dbReference type="ChEBI" id="CHEBI:15378"/>
        <dbReference type="ChEBI" id="CHEBI:59874"/>
        <dbReference type="ChEBI" id="CHEBI:78442"/>
        <dbReference type="ChEBI" id="CHEBI:138191"/>
        <dbReference type="EC" id="3.1.1.29"/>
    </reaction>
</comment>
<comment type="subcellular location">
    <subcellularLocation>
        <location evidence="1">Cytoplasm</location>
    </subcellularLocation>
</comment>
<comment type="similarity">
    <text evidence="1">Belongs to the PTH2 family.</text>
</comment>
<proteinExistence type="inferred from homology"/>
<name>PTH_SULTO</name>
<accession>Q976I0</accession>
<evidence type="ECO:0000255" key="1">
    <source>
        <dbReference type="HAMAP-Rule" id="MF_00628"/>
    </source>
</evidence>
<feature type="chain" id="PRO_0000120305" description="Peptidyl-tRNA hydrolase">
    <location>
        <begin position="1"/>
        <end position="121"/>
    </location>
</feature>
<gene>
    <name evidence="1" type="primary">pth</name>
    <name type="ordered locus">STK_02080</name>
</gene>
<protein>
    <recommendedName>
        <fullName evidence="1">Peptidyl-tRNA hydrolase</fullName>
        <shortName evidence="1">PTH</shortName>
        <ecNumber evidence="1">3.1.1.29</ecNumber>
    </recommendedName>
</protein>
<sequence length="121" mass="13264">MATKMVIVVRTDLDMGKGKIAAQVAHAAVSLVLDILNSSNSLWKEWLYKWLEEGQPKIVVKVPSLDELNKRYEKAIELNLPTTIIQDAGKTQIEPGTITCIGIGPAPVELVDKITGDLKLL</sequence>
<keyword id="KW-0963">Cytoplasm</keyword>
<keyword id="KW-0378">Hydrolase</keyword>
<keyword id="KW-1185">Reference proteome</keyword>
<dbReference type="EC" id="3.1.1.29" evidence="1"/>
<dbReference type="EMBL" id="BA000023">
    <property type="protein sequence ID" value="BAB65167.1"/>
    <property type="molecule type" value="Genomic_DNA"/>
</dbReference>
<dbReference type="RefSeq" id="WP_010978149.1">
    <property type="nucleotide sequence ID" value="NC_003106.2"/>
</dbReference>
<dbReference type="SMR" id="Q976I0"/>
<dbReference type="STRING" id="273063.STK_02080"/>
<dbReference type="GeneID" id="1458097"/>
<dbReference type="KEGG" id="sto:STK_02080"/>
<dbReference type="PATRIC" id="fig|273063.9.peg.254"/>
<dbReference type="eggNOG" id="arCOG04228">
    <property type="taxonomic scope" value="Archaea"/>
</dbReference>
<dbReference type="OrthoDB" id="6075at2157"/>
<dbReference type="Proteomes" id="UP000001015">
    <property type="component" value="Chromosome"/>
</dbReference>
<dbReference type="GO" id="GO:0005829">
    <property type="term" value="C:cytosol"/>
    <property type="evidence" value="ECO:0007669"/>
    <property type="project" value="TreeGrafter"/>
</dbReference>
<dbReference type="GO" id="GO:0004045">
    <property type="term" value="F:peptidyl-tRNA hydrolase activity"/>
    <property type="evidence" value="ECO:0007669"/>
    <property type="project" value="UniProtKB-UniRule"/>
</dbReference>
<dbReference type="GO" id="GO:0006412">
    <property type="term" value="P:translation"/>
    <property type="evidence" value="ECO:0007669"/>
    <property type="project" value="UniProtKB-UniRule"/>
</dbReference>
<dbReference type="CDD" id="cd02430">
    <property type="entry name" value="PTH2"/>
    <property type="match status" value="1"/>
</dbReference>
<dbReference type="FunFam" id="3.40.1490.10:FF:000001">
    <property type="entry name" value="Peptidyl-tRNA hydrolase 2"/>
    <property type="match status" value="1"/>
</dbReference>
<dbReference type="Gene3D" id="3.40.1490.10">
    <property type="entry name" value="Bit1"/>
    <property type="match status" value="1"/>
</dbReference>
<dbReference type="HAMAP" id="MF_00628">
    <property type="entry name" value="Pept_tRNA_hydro_arch"/>
    <property type="match status" value="1"/>
</dbReference>
<dbReference type="InterPro" id="IPR023476">
    <property type="entry name" value="Pep_tRNA_hydro_II_dom_sf"/>
</dbReference>
<dbReference type="InterPro" id="IPR034759">
    <property type="entry name" value="Pept_tRNA_hydro_arch"/>
</dbReference>
<dbReference type="InterPro" id="IPR002833">
    <property type="entry name" value="PTH2"/>
</dbReference>
<dbReference type="NCBIfam" id="TIGR00283">
    <property type="entry name" value="arch_pth2"/>
    <property type="match status" value="1"/>
</dbReference>
<dbReference type="NCBIfam" id="NF003314">
    <property type="entry name" value="PRK04322.1"/>
    <property type="match status" value="1"/>
</dbReference>
<dbReference type="PANTHER" id="PTHR12649">
    <property type="entry name" value="PEPTIDYL-TRNA HYDROLASE 2"/>
    <property type="match status" value="1"/>
</dbReference>
<dbReference type="PANTHER" id="PTHR12649:SF11">
    <property type="entry name" value="PEPTIDYL-TRNA HYDROLASE 2, MITOCHONDRIAL"/>
    <property type="match status" value="1"/>
</dbReference>
<dbReference type="Pfam" id="PF01981">
    <property type="entry name" value="PTH2"/>
    <property type="match status" value="1"/>
</dbReference>
<dbReference type="SUPFAM" id="SSF102462">
    <property type="entry name" value="Peptidyl-tRNA hydrolase II"/>
    <property type="match status" value="1"/>
</dbReference>
<reference key="1">
    <citation type="journal article" date="2001" name="DNA Res.">
        <title>Complete genome sequence of an aerobic thermoacidophilic Crenarchaeon, Sulfolobus tokodaii strain7.</title>
        <authorList>
            <person name="Kawarabayasi Y."/>
            <person name="Hino Y."/>
            <person name="Horikawa H."/>
            <person name="Jin-no K."/>
            <person name="Takahashi M."/>
            <person name="Sekine M."/>
            <person name="Baba S."/>
            <person name="Ankai A."/>
            <person name="Kosugi H."/>
            <person name="Hosoyama A."/>
            <person name="Fukui S."/>
            <person name="Nagai Y."/>
            <person name="Nishijima K."/>
            <person name="Otsuka R."/>
            <person name="Nakazawa H."/>
            <person name="Takamiya M."/>
            <person name="Kato Y."/>
            <person name="Yoshizawa T."/>
            <person name="Tanaka T."/>
            <person name="Kudoh Y."/>
            <person name="Yamazaki J."/>
            <person name="Kushida N."/>
            <person name="Oguchi A."/>
            <person name="Aoki K."/>
            <person name="Masuda S."/>
            <person name="Yanagii M."/>
            <person name="Nishimura M."/>
            <person name="Yamagishi A."/>
            <person name="Oshima T."/>
            <person name="Kikuchi H."/>
        </authorList>
    </citation>
    <scope>NUCLEOTIDE SEQUENCE [LARGE SCALE GENOMIC DNA]</scope>
    <source>
        <strain>DSM 16993 / JCM 10545 / NBRC 100140 / 7</strain>
    </source>
</reference>
<organism>
    <name type="scientific">Sulfurisphaera tokodaii (strain DSM 16993 / JCM 10545 / NBRC 100140 / 7)</name>
    <name type="common">Sulfolobus tokodaii</name>
    <dbReference type="NCBI Taxonomy" id="273063"/>
    <lineage>
        <taxon>Archaea</taxon>
        <taxon>Thermoproteota</taxon>
        <taxon>Thermoprotei</taxon>
        <taxon>Sulfolobales</taxon>
        <taxon>Sulfolobaceae</taxon>
        <taxon>Sulfurisphaera</taxon>
    </lineage>
</organism>